<dbReference type="EMBL" id="CP001127">
    <property type="protein sequence ID" value="ACF89783.1"/>
    <property type="molecule type" value="Genomic_DNA"/>
</dbReference>
<dbReference type="RefSeq" id="WP_000338376.1">
    <property type="nucleotide sequence ID" value="NC_011094.1"/>
</dbReference>
<dbReference type="SMR" id="B4TXX1"/>
<dbReference type="KEGG" id="sew:SeSA_A1943"/>
<dbReference type="HOGENOM" id="CLU_005912_9_2_6"/>
<dbReference type="Proteomes" id="UP000001865">
    <property type="component" value="Chromosome"/>
</dbReference>
<dbReference type="GO" id="GO:0005886">
    <property type="term" value="C:plasma membrane"/>
    <property type="evidence" value="ECO:0007669"/>
    <property type="project" value="UniProtKB-SubCell"/>
</dbReference>
<dbReference type="GO" id="GO:0050660">
    <property type="term" value="F:flavin adenine dinucleotide binding"/>
    <property type="evidence" value="ECO:0007669"/>
    <property type="project" value="InterPro"/>
</dbReference>
<dbReference type="GO" id="GO:0015386">
    <property type="term" value="F:potassium:proton antiporter activity"/>
    <property type="evidence" value="ECO:0007669"/>
    <property type="project" value="UniProtKB-UniRule"/>
</dbReference>
<dbReference type="GO" id="GO:0006884">
    <property type="term" value="P:cell volume homeostasis"/>
    <property type="evidence" value="ECO:0007669"/>
    <property type="project" value="InterPro"/>
</dbReference>
<dbReference type="FunFam" id="1.20.1530.20:FF:000002">
    <property type="entry name" value="K(+)/H(+) antiporter NhaP2"/>
    <property type="match status" value="1"/>
</dbReference>
<dbReference type="Gene3D" id="1.20.1530.20">
    <property type="match status" value="1"/>
</dbReference>
<dbReference type="Gene3D" id="3.30.465.10">
    <property type="match status" value="1"/>
</dbReference>
<dbReference type="Gene3D" id="3.30.70.1450">
    <property type="entry name" value="Regulator of K+ conductance, C-terminal domain"/>
    <property type="match status" value="1"/>
</dbReference>
<dbReference type="HAMAP" id="MF_01075">
    <property type="entry name" value="NhaP2"/>
    <property type="match status" value="1"/>
</dbReference>
<dbReference type="InterPro" id="IPR006153">
    <property type="entry name" value="Cation/H_exchanger_TM"/>
</dbReference>
<dbReference type="InterPro" id="IPR036318">
    <property type="entry name" value="FAD-bd_PCMH-like_sf"/>
</dbReference>
<dbReference type="InterPro" id="IPR016169">
    <property type="entry name" value="FAD-bd_PCMH_sub2"/>
</dbReference>
<dbReference type="InterPro" id="IPR038770">
    <property type="entry name" value="Na+/solute_symporter_sf"/>
</dbReference>
<dbReference type="InterPro" id="IPR023729">
    <property type="entry name" value="NhaP2"/>
</dbReference>
<dbReference type="InterPro" id="IPR006037">
    <property type="entry name" value="RCK_C"/>
</dbReference>
<dbReference type="InterPro" id="IPR036721">
    <property type="entry name" value="RCK_C_sf"/>
</dbReference>
<dbReference type="InterPro" id="IPR005170">
    <property type="entry name" value="Transptr-assoc_dom"/>
</dbReference>
<dbReference type="NCBIfam" id="NF003714">
    <property type="entry name" value="PRK05326.1-1"/>
    <property type="match status" value="1"/>
</dbReference>
<dbReference type="NCBIfam" id="NF003715">
    <property type="entry name" value="PRK05326.1-2"/>
    <property type="match status" value="1"/>
</dbReference>
<dbReference type="NCBIfam" id="NF003716">
    <property type="entry name" value="PRK05326.1-3"/>
    <property type="match status" value="1"/>
</dbReference>
<dbReference type="PANTHER" id="PTHR32507:SF7">
    <property type="entry name" value="K(+)_H(+) ANTIPORTER NHAP2"/>
    <property type="match status" value="1"/>
</dbReference>
<dbReference type="PANTHER" id="PTHR32507">
    <property type="entry name" value="NA(+)/H(+) ANTIPORTER 1"/>
    <property type="match status" value="1"/>
</dbReference>
<dbReference type="Pfam" id="PF03471">
    <property type="entry name" value="CorC_HlyC"/>
    <property type="match status" value="1"/>
</dbReference>
<dbReference type="Pfam" id="PF00999">
    <property type="entry name" value="Na_H_Exchanger"/>
    <property type="match status" value="1"/>
</dbReference>
<dbReference type="Pfam" id="PF02080">
    <property type="entry name" value="TrkA_C"/>
    <property type="match status" value="1"/>
</dbReference>
<dbReference type="SMART" id="SM01091">
    <property type="entry name" value="CorC_HlyC"/>
    <property type="match status" value="1"/>
</dbReference>
<dbReference type="SUPFAM" id="SSF56176">
    <property type="entry name" value="FAD-binding/transporter-associated domain-like"/>
    <property type="match status" value="1"/>
</dbReference>
<dbReference type="SUPFAM" id="SSF116726">
    <property type="entry name" value="TrkA C-terminal domain-like"/>
    <property type="match status" value="1"/>
</dbReference>
<dbReference type="PROSITE" id="PS51202">
    <property type="entry name" value="RCK_C"/>
    <property type="match status" value="1"/>
</dbReference>
<proteinExistence type="inferred from homology"/>
<comment type="function">
    <text evidence="1">K(+)/H(+) antiporter that extrudes potassium in exchange for external protons and maintains the internal concentration of potassium under toxic levels.</text>
</comment>
<comment type="catalytic activity">
    <reaction evidence="1">
        <text>K(+)(in) + H(+)(out) = K(+)(out) + H(+)(in)</text>
        <dbReference type="Rhea" id="RHEA:29467"/>
        <dbReference type="ChEBI" id="CHEBI:15378"/>
        <dbReference type="ChEBI" id="CHEBI:29103"/>
    </reaction>
    <physiologicalReaction direction="left-to-right" evidence="1">
        <dbReference type="Rhea" id="RHEA:29468"/>
    </physiologicalReaction>
</comment>
<comment type="subcellular location">
    <subcellularLocation>
        <location evidence="1">Cell inner membrane</location>
        <topology evidence="1">Multi-pass membrane protein</topology>
    </subcellularLocation>
</comment>
<comment type="similarity">
    <text evidence="1">Belongs to the monovalent cation:proton antiporter 1 (CPA1) transporter (TC 2.A.36) family. NhaP2 subfamily.</text>
</comment>
<accession>B4TXX1</accession>
<gene>
    <name evidence="1" type="primary">nhaP2</name>
    <name type="synonym">cvrA</name>
    <name type="ordered locus">SeSA_A1943</name>
</gene>
<reference key="1">
    <citation type="journal article" date="2011" name="J. Bacteriol.">
        <title>Comparative genomics of 28 Salmonella enterica isolates: evidence for CRISPR-mediated adaptive sublineage evolution.</title>
        <authorList>
            <person name="Fricke W.F."/>
            <person name="Mammel M.K."/>
            <person name="McDermott P.F."/>
            <person name="Tartera C."/>
            <person name="White D.G."/>
            <person name="Leclerc J.E."/>
            <person name="Ravel J."/>
            <person name="Cebula T.A."/>
        </authorList>
    </citation>
    <scope>NUCLEOTIDE SEQUENCE [LARGE SCALE GENOMIC DNA]</scope>
    <source>
        <strain>CVM19633</strain>
    </source>
</reference>
<feature type="chain" id="PRO_1000136716" description="K(+)/H(+) antiporter NhaP2">
    <location>
        <begin position="1"/>
        <end position="577"/>
    </location>
</feature>
<feature type="transmembrane region" description="Helical" evidence="1">
    <location>
        <begin position="3"/>
        <end position="23"/>
    </location>
</feature>
<feature type="transmembrane region" description="Helical" evidence="1">
    <location>
        <begin position="30"/>
        <end position="50"/>
    </location>
</feature>
<feature type="transmembrane region" description="Helical" evidence="1">
    <location>
        <begin position="58"/>
        <end position="78"/>
    </location>
</feature>
<feature type="transmembrane region" description="Helical" evidence="1">
    <location>
        <begin position="87"/>
        <end position="107"/>
    </location>
</feature>
<feature type="transmembrane region" description="Helical" evidence="1">
    <location>
        <begin position="109"/>
        <end position="129"/>
    </location>
</feature>
<feature type="transmembrane region" description="Helical" evidence="1">
    <location>
        <begin position="185"/>
        <end position="205"/>
    </location>
</feature>
<feature type="transmembrane region" description="Helical" evidence="1">
    <location>
        <begin position="221"/>
        <end position="241"/>
    </location>
</feature>
<feature type="transmembrane region" description="Helical" evidence="1">
    <location>
        <begin position="271"/>
        <end position="291"/>
    </location>
</feature>
<feature type="transmembrane region" description="Helical" evidence="1">
    <location>
        <begin position="293"/>
        <end position="313"/>
    </location>
</feature>
<feature type="transmembrane region" description="Helical" evidence="1">
    <location>
        <begin position="334"/>
        <end position="354"/>
    </location>
</feature>
<feature type="transmembrane region" description="Helical" evidence="1">
    <location>
        <begin position="363"/>
        <end position="383"/>
    </location>
</feature>
<feature type="domain" description="RCK C-terminal" evidence="1">
    <location>
        <begin position="403"/>
        <end position="485"/>
    </location>
</feature>
<organism>
    <name type="scientific">Salmonella schwarzengrund (strain CVM19633)</name>
    <dbReference type="NCBI Taxonomy" id="439843"/>
    <lineage>
        <taxon>Bacteria</taxon>
        <taxon>Pseudomonadati</taxon>
        <taxon>Pseudomonadota</taxon>
        <taxon>Gammaproteobacteria</taxon>
        <taxon>Enterobacterales</taxon>
        <taxon>Enterobacteriaceae</taxon>
        <taxon>Salmonella</taxon>
    </lineage>
</organism>
<protein>
    <recommendedName>
        <fullName evidence="1">K(+)/H(+) antiporter NhaP2</fullName>
    </recommendedName>
    <alternativeName>
        <fullName evidence="1">Potassium/proton antiporter NhaP2</fullName>
    </alternativeName>
</protein>
<keyword id="KW-0050">Antiport</keyword>
<keyword id="KW-0997">Cell inner membrane</keyword>
<keyword id="KW-1003">Cell membrane</keyword>
<keyword id="KW-0406">Ion transport</keyword>
<keyword id="KW-0472">Membrane</keyword>
<keyword id="KW-0630">Potassium</keyword>
<keyword id="KW-0633">Potassium transport</keyword>
<keyword id="KW-0812">Transmembrane</keyword>
<keyword id="KW-1133">Transmembrane helix</keyword>
<keyword id="KW-0813">Transport</keyword>
<sequence length="577" mass="62469">MDAATIISLFILGSILVTSSILLSSFSSRLGIPILVIFLAIGMLAGVDGIGGIPFDNYPFAYMVSNLALAIILLDGGMRTQASSFRVALGPALSLATLGVLITSGLTGMMAAWLFHLDLIEGLLIGAIVGSTDAAAVFSLLGGKGLNERVGSTLEIESGSNDPMAVFLTITLIEMIQKHETGLDWMFAVHIIQQFGLGIVFGLGGGYLLQQMINRISLPSGLYPMLALSGGILIFALTTALEGSGILAVYLCGFLLGNRPIRNRYGILQNFDGLAWLAQIAMFLVLGLLVTPSDLWPIAVPALILSIWMIFFARPLSVFTGLLPFRGFNLRERIFISWVGLRGAVPIILAVFPMMAGLENARLFFNVAFFVVLVSLLLQGTSLSWAAKRAKVVVPPVGWPVSRVGLDIHPDNPWEQFIYQLSADKWCVGAALRDLHMPNETRIAALFRNNELFHPTGSTRLQEGDVLCVIGRERDLPALGKLFSQSPPVSLDQRFFGDFILEANAKFADVALIYGLEEGTEYRDKQQTLGEIIQQLLGAAPVVGDQVEFGGMIWTVAEKEDNVVRKIGVRVAEDEAE</sequence>
<evidence type="ECO:0000255" key="1">
    <source>
        <dbReference type="HAMAP-Rule" id="MF_01075"/>
    </source>
</evidence>
<name>NHAP2_SALSV</name>